<accession>Q9Y4D2</accession>
<accession>A0A024R517</accession>
<accession>A7E233</accession>
<accession>Q6WQJ0</accession>
<name>DGLA_HUMAN</name>
<sequence>MPGIVVFRRRWSVGSDDLVLPAIFLFLLHTTWFVILSVVLFGLVYNPHEACSLNLVDHGRGYLGILLSCMIAEMAIIWLSMRGGILYTEPRDSMQYVLYVRLAILVIEFIYAIVGIVWLTQYYTSCNDLTAKNVTLGMVVCNWVVILSVCITVLCVFDPTGRTFVKLRATKRRQRNLRTYNLRHRLEEGQATSWSRRLKVFLCCTRTKDSQSDAYSEIAYLFAEFFRDLDIVPSDIIAGLVLLRQRQRAKRNAVLDEANNDILAFLSGMPVTRNTKYLDLKNSQEMLRYKEVCYYMLFALAAYGWPMYLMRKPACGLCQLARSCSCCLCPARPRFAPGVTIEEDNCCGCNAIAIRRHFLDENMTAVDIVYTSCHDAVYETPFYVAVDHDKKKVVISIRGTLSPKDALTDLTGDAERLPVEGHHGTWLGHKGMVLSAEYIKKKLEQEMVLSQAFGRDLGRGTKHYGLIVVGHSLGAGTAAILSFLLRPQYPTLKCFAYSPPGGLLSEDAMEYSKEFVTAVVLGKDLVPRIGLSQLEGFRRQLLDVLQRSTKPKWRIIVGATKCIPKSELPEEVEVTTLASTRLWTHPSDLTIALSASTPLYPPGRIIHVVHNHPAEQCCCCEQEEPTYFAIWGDNKAFNEVIISPAMLHEHLPYVVMEGLNKVLENYNKGKTALLSAAKVMVSPTEVDLTPELIFQQQPLPTGPPMPTGLALELPTADHRNSSVRSKSQSEMSLEGFSEGRLLSPVVAAAARQDPVELLLLSTQERLAAELQARRAPLATMESLSDTESLYSFDSRRSSGFRSIRGSPSLHAVLERDEGHLFYIDPAIPEENPSLSSRTELLAADSLSKHSQDTQPLEAALGSGGVTPERPPSAAANDEEEEVGGGGGGPASRGELALHNGRLGDSPSPQVLEFAEFIDSLFNLDSKSSSFQDLYCMVVPESPTSDYAEGPKSPSQQEILLRAQFEPNLVPKPPRLFAGSADPSSGISLSPSFPLSSSGELMDLTPTGLSSQECLAADKIRTSTPTGHGASPAKQDELVISAR</sequence>
<dbReference type="EC" id="3.1.1.116" evidence="6 9 10"/>
<dbReference type="EMBL" id="AY275377">
    <property type="protein sequence ID" value="AAQ17119.1"/>
    <property type="molecule type" value="mRNA"/>
</dbReference>
<dbReference type="EMBL" id="AB014559">
    <property type="protein sequence ID" value="BAA31634.2"/>
    <property type="status" value="ALT_INIT"/>
    <property type="molecule type" value="mRNA"/>
</dbReference>
<dbReference type="EMBL" id="AP002380">
    <property type="status" value="NOT_ANNOTATED_CDS"/>
    <property type="molecule type" value="Genomic_DNA"/>
</dbReference>
<dbReference type="EMBL" id="CH471076">
    <property type="protein sequence ID" value="EAW73960.1"/>
    <property type="molecule type" value="Genomic_DNA"/>
</dbReference>
<dbReference type="EMBL" id="CH471076">
    <property type="protein sequence ID" value="EAW73961.1"/>
    <property type="molecule type" value="Genomic_DNA"/>
</dbReference>
<dbReference type="EMBL" id="BC150176">
    <property type="protein sequence ID" value="AAI50177.1"/>
    <property type="molecule type" value="mRNA"/>
</dbReference>
<dbReference type="EMBL" id="BC150195">
    <property type="protein sequence ID" value="AAI50196.1"/>
    <property type="molecule type" value="mRNA"/>
</dbReference>
<dbReference type="EMBL" id="BC152453">
    <property type="protein sequence ID" value="AAI52454.1"/>
    <property type="molecule type" value="mRNA"/>
</dbReference>
<dbReference type="CCDS" id="CCDS31578.1"/>
<dbReference type="PIR" id="T00370">
    <property type="entry name" value="T00370"/>
</dbReference>
<dbReference type="RefSeq" id="NP_006124.1">
    <property type="nucleotide sequence ID" value="NM_006133.3"/>
</dbReference>
<dbReference type="RefSeq" id="XP_047283496.1">
    <property type="nucleotide sequence ID" value="XM_047427540.1"/>
</dbReference>
<dbReference type="RefSeq" id="XP_047283497.1">
    <property type="nucleotide sequence ID" value="XM_047427541.1"/>
</dbReference>
<dbReference type="RefSeq" id="XP_047283498.1">
    <property type="nucleotide sequence ID" value="XM_047427542.1"/>
</dbReference>
<dbReference type="RefSeq" id="XP_047283499.1">
    <property type="nucleotide sequence ID" value="XM_047427543.1"/>
</dbReference>
<dbReference type="RefSeq" id="XP_054225827.1">
    <property type="nucleotide sequence ID" value="XM_054369852.1"/>
</dbReference>
<dbReference type="RefSeq" id="XP_054225828.1">
    <property type="nucleotide sequence ID" value="XM_054369853.1"/>
</dbReference>
<dbReference type="RefSeq" id="XP_054225829.1">
    <property type="nucleotide sequence ID" value="XM_054369854.1"/>
</dbReference>
<dbReference type="SMR" id="Q9Y4D2"/>
<dbReference type="BioGRID" id="107205">
    <property type="interactions" value="20"/>
</dbReference>
<dbReference type="FunCoup" id="Q9Y4D2">
    <property type="interactions" value="559"/>
</dbReference>
<dbReference type="IntAct" id="Q9Y4D2">
    <property type="interactions" value="14"/>
</dbReference>
<dbReference type="STRING" id="9606.ENSP00000257215"/>
<dbReference type="BindingDB" id="Q9Y4D2"/>
<dbReference type="ChEMBL" id="CHEMBL5545"/>
<dbReference type="DrugCentral" id="Q9Y4D2"/>
<dbReference type="GuidetoPHARMACOLOGY" id="1396"/>
<dbReference type="SwissLipids" id="SLP:000000323"/>
<dbReference type="ESTHER" id="human-DAGLA">
    <property type="family name" value="Lipase_3"/>
</dbReference>
<dbReference type="GlyCosmos" id="Q9Y4D2">
    <property type="glycosylation" value="1 site, No reported glycans"/>
</dbReference>
<dbReference type="GlyGen" id="Q9Y4D2">
    <property type="glycosylation" value="1 site"/>
</dbReference>
<dbReference type="iPTMnet" id="Q9Y4D2"/>
<dbReference type="PhosphoSitePlus" id="Q9Y4D2"/>
<dbReference type="SwissPalm" id="Q9Y4D2"/>
<dbReference type="BioMuta" id="DAGLA"/>
<dbReference type="DMDM" id="114149271"/>
<dbReference type="jPOST" id="Q9Y4D2"/>
<dbReference type="MassIVE" id="Q9Y4D2"/>
<dbReference type="PaxDb" id="9606-ENSP00000257215"/>
<dbReference type="PeptideAtlas" id="Q9Y4D2"/>
<dbReference type="ProteomicsDB" id="86167"/>
<dbReference type="Antibodypedia" id="28260">
    <property type="antibodies" value="153 antibodies from 29 providers"/>
</dbReference>
<dbReference type="DNASU" id="747"/>
<dbReference type="Ensembl" id="ENST00000257215.10">
    <property type="protein sequence ID" value="ENSP00000257215.5"/>
    <property type="gene ID" value="ENSG00000134780.10"/>
</dbReference>
<dbReference type="GeneID" id="747"/>
<dbReference type="KEGG" id="hsa:747"/>
<dbReference type="MANE-Select" id="ENST00000257215.10">
    <property type="protein sequence ID" value="ENSP00000257215.5"/>
    <property type="RefSeq nucleotide sequence ID" value="NM_006133.3"/>
    <property type="RefSeq protein sequence ID" value="NP_006124.1"/>
</dbReference>
<dbReference type="UCSC" id="uc001nsa.4">
    <property type="organism name" value="human"/>
</dbReference>
<dbReference type="AGR" id="HGNC:1165"/>
<dbReference type="CTD" id="747"/>
<dbReference type="DisGeNET" id="747"/>
<dbReference type="GeneCards" id="DAGLA"/>
<dbReference type="HGNC" id="HGNC:1165">
    <property type="gene designation" value="DAGLA"/>
</dbReference>
<dbReference type="HPA" id="ENSG00000134780">
    <property type="expression patterns" value="Tissue enhanced (brain)"/>
</dbReference>
<dbReference type="MalaCards" id="DAGLA"/>
<dbReference type="MIM" id="168885">
    <property type="type" value="phenotype"/>
</dbReference>
<dbReference type="MIM" id="608687">
    <property type="type" value="phenotype"/>
</dbReference>
<dbReference type="MIM" id="614015">
    <property type="type" value="gene"/>
</dbReference>
<dbReference type="neXtProt" id="NX_Q9Y4D2"/>
<dbReference type="OpenTargets" id="ENSG00000134780"/>
<dbReference type="PharmGKB" id="PA162383158"/>
<dbReference type="VEuPathDB" id="HostDB:ENSG00000134780"/>
<dbReference type="eggNOG" id="KOG2088">
    <property type="taxonomic scope" value="Eukaryota"/>
</dbReference>
<dbReference type="GeneTree" id="ENSGT00940000161192"/>
<dbReference type="HOGENOM" id="CLU_008300_1_0_1"/>
<dbReference type="InParanoid" id="Q9Y4D2"/>
<dbReference type="OMA" id="YCMVAPE"/>
<dbReference type="OrthoDB" id="438440at2759"/>
<dbReference type="PAN-GO" id="Q9Y4D2">
    <property type="GO annotations" value="11 GO annotations based on evolutionary models"/>
</dbReference>
<dbReference type="PhylomeDB" id="Q9Y4D2"/>
<dbReference type="TreeFam" id="TF312928"/>
<dbReference type="BioCyc" id="MetaCyc:ENSG00000134780-MONOMER"/>
<dbReference type="BRENDA" id="3.1.1.116">
    <property type="organism ID" value="2681"/>
</dbReference>
<dbReference type="PathwayCommons" id="Q9Y4D2"/>
<dbReference type="Reactome" id="R-HSA-426048">
    <property type="pathway name" value="Arachidonate production from DAG"/>
</dbReference>
<dbReference type="SABIO-RK" id="Q9Y4D2"/>
<dbReference type="SignaLink" id="Q9Y4D2"/>
<dbReference type="SIGNOR" id="Q9Y4D2"/>
<dbReference type="BioGRID-ORCS" id="747">
    <property type="hits" value="13 hits in 1153 CRISPR screens"/>
</dbReference>
<dbReference type="ChiTaRS" id="DAGLA">
    <property type="organism name" value="human"/>
</dbReference>
<dbReference type="GenomeRNAi" id="747"/>
<dbReference type="Pharos" id="Q9Y4D2">
    <property type="development level" value="Tchem"/>
</dbReference>
<dbReference type="PRO" id="PR:Q9Y4D2"/>
<dbReference type="Proteomes" id="UP000005640">
    <property type="component" value="Chromosome 11"/>
</dbReference>
<dbReference type="RNAct" id="Q9Y4D2">
    <property type="molecule type" value="protein"/>
</dbReference>
<dbReference type="Bgee" id="ENSG00000134780">
    <property type="expression patterns" value="Expressed in right frontal lobe and 110 other cell types or tissues"/>
</dbReference>
<dbReference type="ExpressionAtlas" id="Q9Y4D2">
    <property type="expression patterns" value="baseline and differential"/>
</dbReference>
<dbReference type="GO" id="GO:0005737">
    <property type="term" value="C:cytoplasm"/>
    <property type="evidence" value="ECO:0000318"/>
    <property type="project" value="GO_Central"/>
</dbReference>
<dbReference type="GO" id="GO:0032590">
    <property type="term" value="C:dendrite membrane"/>
    <property type="evidence" value="ECO:0000314"/>
    <property type="project" value="UniProtKB"/>
</dbReference>
<dbReference type="GO" id="GO:0032591">
    <property type="term" value="C:dendritic spine membrane"/>
    <property type="evidence" value="ECO:0000250"/>
    <property type="project" value="UniProtKB"/>
</dbReference>
<dbReference type="GO" id="GO:0031901">
    <property type="term" value="C:early endosome membrane"/>
    <property type="evidence" value="ECO:0000314"/>
    <property type="project" value="UniProtKB"/>
</dbReference>
<dbReference type="GO" id="GO:0005886">
    <property type="term" value="C:plasma membrane"/>
    <property type="evidence" value="ECO:0000304"/>
    <property type="project" value="Reactome"/>
</dbReference>
<dbReference type="GO" id="GO:0098839">
    <property type="term" value="C:postsynaptic density membrane"/>
    <property type="evidence" value="ECO:0000314"/>
    <property type="project" value="UniProtKB"/>
</dbReference>
<dbReference type="GO" id="GO:0045211">
    <property type="term" value="C:postsynaptic membrane"/>
    <property type="evidence" value="ECO:0000318"/>
    <property type="project" value="GO_Central"/>
</dbReference>
<dbReference type="GO" id="GO:0043196">
    <property type="term" value="C:varicosity"/>
    <property type="evidence" value="ECO:0007669"/>
    <property type="project" value="Ensembl"/>
</dbReference>
<dbReference type="GO" id="GO:0004465">
    <property type="term" value="F:lipoprotein lipase activity"/>
    <property type="evidence" value="ECO:0000318"/>
    <property type="project" value="GO_Central"/>
</dbReference>
<dbReference type="GO" id="GO:0046872">
    <property type="term" value="F:metal ion binding"/>
    <property type="evidence" value="ECO:0007669"/>
    <property type="project" value="UniProtKB-KW"/>
</dbReference>
<dbReference type="GO" id="GO:0047372">
    <property type="term" value="F:monoacylglycerol lipase activity"/>
    <property type="evidence" value="ECO:0000304"/>
    <property type="project" value="Reactome"/>
</dbReference>
<dbReference type="GO" id="GO:0019369">
    <property type="term" value="P:arachidonate metabolic process"/>
    <property type="evidence" value="ECO:0000314"/>
    <property type="project" value="UniProtKB"/>
</dbReference>
<dbReference type="GO" id="GO:1901696">
    <property type="term" value="P:cannabinoid biosynthetic process"/>
    <property type="evidence" value="ECO:0007669"/>
    <property type="project" value="Ensembl"/>
</dbReference>
<dbReference type="GO" id="GO:0046340">
    <property type="term" value="P:diacylglycerol catabolic process"/>
    <property type="evidence" value="ECO:0000314"/>
    <property type="project" value="UniProtKB"/>
</dbReference>
<dbReference type="GO" id="GO:0006640">
    <property type="term" value="P:monoacylglycerol biosynthetic process"/>
    <property type="evidence" value="ECO:0007669"/>
    <property type="project" value="Ensembl"/>
</dbReference>
<dbReference type="GO" id="GO:0007405">
    <property type="term" value="P:neuroblast proliferation"/>
    <property type="evidence" value="ECO:0007669"/>
    <property type="project" value="Ensembl"/>
</dbReference>
<dbReference type="GO" id="GO:0150077">
    <property type="term" value="P:regulation of neuroinflammatory response"/>
    <property type="evidence" value="ECO:0000250"/>
    <property type="project" value="UniProtKB"/>
</dbReference>
<dbReference type="GO" id="GO:0098921">
    <property type="term" value="P:retrograde trans-synaptic signaling by endocannabinoid"/>
    <property type="evidence" value="ECO:0000315"/>
    <property type="project" value="UniProtKB"/>
</dbReference>
<dbReference type="CDD" id="cd00519">
    <property type="entry name" value="Lipase_3"/>
    <property type="match status" value="1"/>
</dbReference>
<dbReference type="FunFam" id="3.40.50.1820:FF:000015">
    <property type="entry name" value="Sn1-specific diacylglycerol lipase alpha"/>
    <property type="match status" value="1"/>
</dbReference>
<dbReference type="Gene3D" id="3.40.50.1820">
    <property type="entry name" value="alpha/beta hydrolase"/>
    <property type="match status" value="1"/>
</dbReference>
<dbReference type="InterPro" id="IPR029058">
    <property type="entry name" value="AB_hydrolase_fold"/>
</dbReference>
<dbReference type="InterPro" id="IPR052214">
    <property type="entry name" value="DAG_Lipase-Related"/>
</dbReference>
<dbReference type="InterPro" id="IPR002921">
    <property type="entry name" value="Fungal_lipase-type"/>
</dbReference>
<dbReference type="PANTHER" id="PTHR45792">
    <property type="entry name" value="DIACYLGLYCEROL LIPASE HOMOLOG-RELATED"/>
    <property type="match status" value="1"/>
</dbReference>
<dbReference type="PANTHER" id="PTHR45792:SF8">
    <property type="entry name" value="DIACYLGLYCEROL LIPASE-ALPHA"/>
    <property type="match status" value="1"/>
</dbReference>
<dbReference type="Pfam" id="PF01764">
    <property type="entry name" value="Lipase_3"/>
    <property type="match status" value="1"/>
</dbReference>
<dbReference type="SUPFAM" id="SSF53474">
    <property type="entry name" value="alpha/beta-Hydrolases"/>
    <property type="match status" value="1"/>
</dbReference>
<dbReference type="PROSITE" id="PS00120">
    <property type="entry name" value="LIPASE_SER"/>
    <property type="match status" value="1"/>
</dbReference>
<organism>
    <name type="scientific">Homo sapiens</name>
    <name type="common">Human</name>
    <dbReference type="NCBI Taxonomy" id="9606"/>
    <lineage>
        <taxon>Eukaryota</taxon>
        <taxon>Metazoa</taxon>
        <taxon>Chordata</taxon>
        <taxon>Craniata</taxon>
        <taxon>Vertebrata</taxon>
        <taxon>Euteleostomi</taxon>
        <taxon>Mammalia</taxon>
        <taxon>Eutheria</taxon>
        <taxon>Euarchontoglires</taxon>
        <taxon>Primates</taxon>
        <taxon>Haplorrhini</taxon>
        <taxon>Catarrhini</taxon>
        <taxon>Hominidae</taxon>
        <taxon>Homo</taxon>
    </lineage>
</organism>
<evidence type="ECO:0000250" key="1">
    <source>
        <dbReference type="UniProtKB" id="Q5YLM1"/>
    </source>
</evidence>
<evidence type="ECO:0000250" key="2">
    <source>
        <dbReference type="UniProtKB" id="Q6WQJ1"/>
    </source>
</evidence>
<evidence type="ECO:0000255" key="3"/>
<evidence type="ECO:0000255" key="4">
    <source>
        <dbReference type="PROSITE-ProRule" id="PRU10037"/>
    </source>
</evidence>
<evidence type="ECO:0000256" key="5">
    <source>
        <dbReference type="SAM" id="MobiDB-lite"/>
    </source>
</evidence>
<evidence type="ECO:0000269" key="6">
    <source>
    </source>
</evidence>
<evidence type="ECO:0000269" key="7">
    <source>
    </source>
</evidence>
<evidence type="ECO:0000269" key="8">
    <source>
    </source>
</evidence>
<evidence type="ECO:0000269" key="9">
    <source>
    </source>
</evidence>
<evidence type="ECO:0000269" key="10">
    <source>
    </source>
</evidence>
<evidence type="ECO:0000269" key="11">
    <source>
    </source>
</evidence>
<evidence type="ECO:0000269" key="12">
    <source>
    </source>
</evidence>
<evidence type="ECO:0000303" key="13">
    <source>
    </source>
</evidence>
<evidence type="ECO:0000303" key="14">
    <source ref="1"/>
</evidence>
<evidence type="ECO:0000305" key="15"/>
<evidence type="ECO:0000305" key="16">
    <source>
    </source>
</evidence>
<evidence type="ECO:0000305" key="17">
    <source>
    </source>
</evidence>
<evidence type="ECO:0000305" key="18">
    <source>
    </source>
</evidence>
<proteinExistence type="evidence at protein level"/>
<reference key="1">
    <citation type="submission" date="2003-04" db="EMBL/GenBank/DDBJ databases">
        <title>NSDDR a novel tetra-spanning transmembrane protein with a unique integration pattern to the plasma membrane regulates the extension of the dendritic trees of Purkinje cells.</title>
        <authorList>
            <person name="Horiguchi S."/>
            <person name="Tashiro K."/>
            <person name="Takahashi J."/>
            <person name="Hashimoto N."/>
            <person name="Nakano I."/>
            <person name="Tsuchida Y."/>
            <person name="Hirai H."/>
            <person name="Honjo T."/>
        </authorList>
    </citation>
    <scope>NUCLEOTIDE SEQUENCE [MRNA]</scope>
</reference>
<reference key="2">
    <citation type="journal article" date="1998" name="DNA Res.">
        <title>Prediction of the coding sequences of unidentified human genes. X. The complete sequences of 100 new cDNA clones from brain which can code for large proteins in vitro.</title>
        <authorList>
            <person name="Ishikawa K."/>
            <person name="Nagase T."/>
            <person name="Suyama M."/>
            <person name="Miyajima N."/>
            <person name="Tanaka A."/>
            <person name="Kotani H."/>
            <person name="Nomura N."/>
            <person name="Ohara O."/>
        </authorList>
    </citation>
    <scope>NUCLEOTIDE SEQUENCE [LARGE SCALE MRNA]</scope>
    <source>
        <tissue>Brain</tissue>
    </source>
</reference>
<reference key="3">
    <citation type="journal article" date="2002" name="DNA Res.">
        <title>Construction of expression-ready cDNA clones for KIAA genes: manual curation of 330 KIAA cDNA clones.</title>
        <authorList>
            <person name="Nakajima D."/>
            <person name="Okazaki N."/>
            <person name="Yamakawa H."/>
            <person name="Kikuno R."/>
            <person name="Ohara O."/>
            <person name="Nagase T."/>
        </authorList>
    </citation>
    <scope>SEQUENCE REVISION</scope>
</reference>
<reference key="4">
    <citation type="journal article" date="2006" name="Nature">
        <title>Human chromosome 11 DNA sequence and analysis including novel gene identification.</title>
        <authorList>
            <person name="Taylor T.D."/>
            <person name="Noguchi H."/>
            <person name="Totoki Y."/>
            <person name="Toyoda A."/>
            <person name="Kuroki Y."/>
            <person name="Dewar K."/>
            <person name="Lloyd C."/>
            <person name="Itoh T."/>
            <person name="Takeda T."/>
            <person name="Kim D.-W."/>
            <person name="She X."/>
            <person name="Barlow K.F."/>
            <person name="Bloom T."/>
            <person name="Bruford E."/>
            <person name="Chang J.L."/>
            <person name="Cuomo C.A."/>
            <person name="Eichler E."/>
            <person name="FitzGerald M.G."/>
            <person name="Jaffe D.B."/>
            <person name="LaButti K."/>
            <person name="Nicol R."/>
            <person name="Park H.-S."/>
            <person name="Seaman C."/>
            <person name="Sougnez C."/>
            <person name="Yang X."/>
            <person name="Zimmer A.R."/>
            <person name="Zody M.C."/>
            <person name="Birren B.W."/>
            <person name="Nusbaum C."/>
            <person name="Fujiyama A."/>
            <person name="Hattori M."/>
            <person name="Rogers J."/>
            <person name="Lander E.S."/>
            <person name="Sakaki Y."/>
        </authorList>
    </citation>
    <scope>NUCLEOTIDE SEQUENCE [LARGE SCALE GENOMIC DNA]</scope>
</reference>
<reference key="5">
    <citation type="submission" date="2005-07" db="EMBL/GenBank/DDBJ databases">
        <authorList>
            <person name="Mural R.J."/>
            <person name="Istrail S."/>
            <person name="Sutton G.G."/>
            <person name="Florea L."/>
            <person name="Halpern A.L."/>
            <person name="Mobarry C.M."/>
            <person name="Lippert R."/>
            <person name="Walenz B."/>
            <person name="Shatkay H."/>
            <person name="Dew I."/>
            <person name="Miller J.R."/>
            <person name="Flanigan M.J."/>
            <person name="Edwards N.J."/>
            <person name="Bolanos R."/>
            <person name="Fasulo D."/>
            <person name="Halldorsson B.V."/>
            <person name="Hannenhalli S."/>
            <person name="Turner R."/>
            <person name="Yooseph S."/>
            <person name="Lu F."/>
            <person name="Nusskern D.R."/>
            <person name="Shue B.C."/>
            <person name="Zheng X.H."/>
            <person name="Zhong F."/>
            <person name="Delcher A.L."/>
            <person name="Huson D.H."/>
            <person name="Kravitz S.A."/>
            <person name="Mouchard L."/>
            <person name="Reinert K."/>
            <person name="Remington K.A."/>
            <person name="Clark A.G."/>
            <person name="Waterman M.S."/>
            <person name="Eichler E.E."/>
            <person name="Adams M.D."/>
            <person name="Hunkapiller M.W."/>
            <person name="Myers E.W."/>
            <person name="Venter J.C."/>
        </authorList>
    </citation>
    <scope>NUCLEOTIDE SEQUENCE [LARGE SCALE GENOMIC DNA]</scope>
</reference>
<reference key="6">
    <citation type="journal article" date="2004" name="Genome Res.">
        <title>The status, quality, and expansion of the NIH full-length cDNA project: the Mammalian Gene Collection (MGC).</title>
        <authorList>
            <consortium name="The MGC Project Team"/>
        </authorList>
    </citation>
    <scope>NUCLEOTIDE SEQUENCE [LARGE SCALE MRNA]</scope>
</reference>
<reference key="7">
    <citation type="journal article" date="2003" name="J. Cell Biol.">
        <title>Cloning of the first sn1-DAG lipases points to the spatial and temporal regulation of endocannabinoid signaling in the brain.</title>
        <authorList>
            <person name="Bisogno T."/>
            <person name="Howell F."/>
            <person name="Williams G."/>
            <person name="Minassi A."/>
            <person name="Cascio M.G."/>
            <person name="Ligresti A."/>
            <person name="Matias I."/>
            <person name="Schiano-Moriello A."/>
            <person name="Paul P."/>
            <person name="Williams E.-J."/>
            <person name="Gangadharan U."/>
            <person name="Hobbs C."/>
            <person name="Di Marzo V."/>
            <person name="Doherty P."/>
        </authorList>
    </citation>
    <scope>FUNCTION</scope>
    <scope>COFACTOR</scope>
    <scope>BIOPHYSICOCHEMICAL PROPERTIES</scope>
    <scope>ACTIVITY REGULATION</scope>
    <scope>TISSUE SPECIFICITY</scope>
    <scope>CATALYTIC ACTIVITY</scope>
</reference>
<reference key="8">
    <citation type="journal article" date="2005" name="Mol. Pharmacol.">
        <title>Stimulation of endocannabinoid formation in brain slice cultures through activation of group I metabotropic glutamate receptors.</title>
        <authorList>
            <person name="Jung K.-M."/>
            <person name="Mangieri R."/>
            <person name="Stapleton C."/>
            <person name="Kim J."/>
            <person name="Fegley D."/>
            <person name="Wallace M."/>
            <person name="Mackie K."/>
            <person name="Piomelli D."/>
        </authorList>
    </citation>
    <scope>TISSUE SPECIFICITY</scope>
</reference>
<reference key="9">
    <citation type="journal article" date="2013" name="Nat. Neurosci.">
        <title>CaMKII regulates diacylglycerol lipase-alpha and striatal endocannabinoid signaling.</title>
        <authorList>
            <person name="Shonesy B.C."/>
            <person name="Wang X."/>
            <person name="Rose K.L."/>
            <person name="Ramikie T.S."/>
            <person name="Cavener V.S."/>
            <person name="Rentz T."/>
            <person name="Baucum A.J. II"/>
            <person name="Jalan-Sakrikar N."/>
            <person name="Mackie K."/>
            <person name="Winder D.G."/>
            <person name="Patel S."/>
            <person name="Colbran R.J."/>
        </authorList>
    </citation>
    <scope>CATALYTIC ACTIVITY</scope>
    <scope>FUNCTION</scope>
    <scope>BIOPHYSICOCHEMICAL PROPERTIES</scope>
    <scope>PHOSPHORYLATION AT SER-782 AND SER-808</scope>
    <scope>INTERACTION WITH CAMK2A</scope>
    <scope>MUTAGENESIS OF SER-782 AND SER-808</scope>
    <scope>ACTIVITY REGULATION</scope>
</reference>
<reference key="10">
    <citation type="journal article" date="2016" name="Mol. Cell. Neurosci.">
        <title>Regulated endosomal trafficking of Diacylglycerol lipase alpha (DAGLalpha) generates distinct cellular pools; implications for endocannabinoid signaling.</title>
        <authorList>
            <person name="Zhou Y."/>
            <person name="Howell F.V."/>
            <person name="Glebov O.O."/>
            <person name="Albrecht D."/>
            <person name="Williams G."/>
            <person name="Doherty P."/>
        </authorList>
    </citation>
    <scope>SUBCELLULAR LOCATION</scope>
</reference>
<reference key="11">
    <citation type="journal article" date="2016" name="Proc. Natl. Acad. Sci. U.S.A.">
        <title>Rapid and profound rewiring of brain lipid signaling networks by acute diacylglycerol lipase inhibition.</title>
        <authorList>
            <person name="Ogasawara D."/>
            <person name="Deng H."/>
            <person name="Viader A."/>
            <person name="Baggelaar M.P."/>
            <person name="Breman A."/>
            <person name="den Dulk H."/>
            <person name="van den Nieuwendijk A.M."/>
            <person name="van den Nieuwendijk A.M."/>
            <person name="Soethoudt M."/>
            <person name="van der Wel T."/>
            <person name="Zhou J."/>
            <person name="Overkleeft H.S."/>
            <person name="Sanchez-Alavez M."/>
            <person name="Mori S."/>
            <person name="Mo S."/>
            <person name="Nguyen W."/>
            <person name="Conti B."/>
            <person name="Liu X."/>
            <person name="Chen Y."/>
            <person name="Liu Q.S."/>
            <person name="Cravatt B.F."/>
            <person name="van der Stelt M."/>
        </authorList>
    </citation>
    <scope>CATALYTIC ACTIVITY</scope>
    <scope>FUNCTION</scope>
    <scope>ACTIVITY REGULATION</scope>
</reference>
<reference key="12">
    <citation type="journal article" date="2008" name="Hum. Mol. Genet.">
        <title>A duplication at chromosome 11q12.2-11q12.3 is associated with spinocerebellar ataxia type 20.</title>
        <authorList>
            <person name="Knight M.A."/>
            <person name="Hernandez D."/>
            <person name="Diede S.J."/>
            <person name="Dauwerse H.G."/>
            <person name="Rafferty I."/>
            <person name="van de Leemput J."/>
            <person name="Forrest S.M."/>
            <person name="Gardner R.J."/>
            <person name="Storey E."/>
            <person name="van Ommen G.J."/>
            <person name="Tapscott S.J."/>
            <person name="Fischbeck K.H."/>
            <person name="Singleton A.B."/>
        </authorList>
    </citation>
    <scope>POSSIBLE INVOLVEMENT IN SCA20</scope>
</reference>
<reference key="13">
    <citation type="journal article" date="2022" name="Brain">
        <title>Endocannabinoid dysfunction in neurological disease: neuro-ocular DAGLA-related syndrome.</title>
        <authorList>
            <person name="Bainbridge M.N."/>
            <person name="Mazumder A."/>
            <person name="Ogasawara D."/>
            <person name="Abou Jamra R."/>
            <person name="Bernard G."/>
            <person name="Bertini E."/>
            <person name="Burglen L."/>
            <person name="Cope H."/>
            <person name="Crawford A."/>
            <person name="Derksen A."/>
            <person name="Dure L."/>
            <person name="Gantz E."/>
            <person name="Koch-Hogrebe M."/>
            <person name="Hurst A.C.E."/>
            <person name="Mahida S."/>
            <person name="Marshall P."/>
            <person name="Micalizzi A."/>
            <person name="Novelli A."/>
            <person name="Peng H."/>
            <person name="Rodriguez D."/>
            <person name="Robbins S.L."/>
            <person name="Rutledge S.L."/>
            <person name="Scalise R."/>
            <person name="Schliesske S."/>
            <person name="Shashi V."/>
            <person name="Srivastava S."/>
            <person name="Thiffault I."/>
            <person name="Topol S."/>
            <person name="Qebibo L."/>
            <person name="Wieczorek D."/>
            <person name="Cravatt B."/>
            <person name="Haricharan S."/>
            <person name="Torkamani A."/>
            <person name="Friedman J."/>
        </authorList>
    </citation>
    <scope>INVOLVEMENT IN NOC2</scope>
    <scope>VARIANTS NOC2 790-TYR--ARG-1042 DEL; 814-GLU--ARG-1042 DEL; 851-GLN--ARG-1042 DEL AND 829-GLU--ARG-1042 DEL</scope>
    <scope>CHARACTERIZATION OF VARIANT NOC2 814-GLU--ARG-1042 DEL</scope>
</reference>
<comment type="function">
    <text evidence="2 6 9 10">Serine hydrolase that hydrolyzes arachidonic acid-esterified diacylglycerols (DAGs) to produce the principal endocannabinoid, 2-arachidonoylglycerol (2-AG) (PubMed:14610053, PubMed:23502535, PubMed:26668358). Preferentially hydrolyzes sn-1 fatty acids from diacylglycerols (DAG) that contain arachidonic acid (AA) esterified at the sn-2 position to biosynthesize 2-AG (PubMed:14610053, PubMed:23502535, PubMed:26668358). Has negligible activity against other lipids including monoacylglycerols and phospholipids (PubMed:14610053). Plays a key role in regulating 2-AG signaling in the central nervous system (CNS). Regulates 2-AG involved in retrograde suppression at central synapses. Supports axonal growth during development and adult neurogenesis. Plays a role for eCB signaling in the physiological regulation of anxiety and depressive behaviors. Also regulates neuroinflammatory responses in the brain, in particular, LPS-induced microglial activation (By similarity).</text>
</comment>
<comment type="catalytic activity">
    <reaction evidence="6">
        <text>a 1,2-diacyl-sn-glycerol + H2O = a 2-acylglycerol + a fatty acid + H(+)</text>
        <dbReference type="Rhea" id="RHEA:33275"/>
        <dbReference type="ChEBI" id="CHEBI:15377"/>
        <dbReference type="ChEBI" id="CHEBI:15378"/>
        <dbReference type="ChEBI" id="CHEBI:17389"/>
        <dbReference type="ChEBI" id="CHEBI:17815"/>
        <dbReference type="ChEBI" id="CHEBI:28868"/>
        <dbReference type="EC" id="3.1.1.116"/>
    </reaction>
    <physiologicalReaction direction="left-to-right" evidence="16">
        <dbReference type="Rhea" id="RHEA:33276"/>
    </physiologicalReaction>
</comment>
<comment type="catalytic activity">
    <reaction evidence="6 9 10">
        <text>1-octadecanoyl-2-(5Z,8Z,11Z,14Z-eicosatetraenoyl)-sn-glycerol + H2O = 2-(5Z,8Z,11Z,14Z-eicosatetraenoyl)-glycerol + octadecanoate + H(+)</text>
        <dbReference type="Rhea" id="RHEA:38507"/>
        <dbReference type="ChEBI" id="CHEBI:15377"/>
        <dbReference type="ChEBI" id="CHEBI:15378"/>
        <dbReference type="ChEBI" id="CHEBI:25629"/>
        <dbReference type="ChEBI" id="CHEBI:52392"/>
        <dbReference type="ChEBI" id="CHEBI:75728"/>
    </reaction>
    <physiologicalReaction direction="left-to-right" evidence="16 17 18">
        <dbReference type="Rhea" id="RHEA:38508"/>
    </physiologicalReaction>
</comment>
<comment type="catalytic activity">
    <reaction evidence="6">
        <text>1,2-di-(9Z-octadecenoyl)-sn-glycerol + H2O = 2-(9Z-octadecenoyl)-glycerol + (9Z)-octadecenoate + H(+)</text>
        <dbReference type="Rhea" id="RHEA:38511"/>
        <dbReference type="ChEBI" id="CHEBI:15377"/>
        <dbReference type="ChEBI" id="CHEBI:15378"/>
        <dbReference type="ChEBI" id="CHEBI:30823"/>
        <dbReference type="ChEBI" id="CHEBI:52333"/>
        <dbReference type="ChEBI" id="CHEBI:73990"/>
    </reaction>
    <physiologicalReaction direction="left-to-right" evidence="16">
        <dbReference type="Rhea" id="RHEA:38512"/>
    </physiologicalReaction>
</comment>
<comment type="catalytic activity">
    <reaction evidence="6">
        <text>1-(9Z-octadecenoyl)-2-(5Z,8Z,11Z,14Z-eicosatetraenoyl)-sn-glycerol + H2O = 2-(5Z,8Z,11Z,14Z-eicosatetraenoyl)-glycerol + (9Z)-octadecenoate + H(+)</text>
        <dbReference type="Rhea" id="RHEA:38515"/>
        <dbReference type="ChEBI" id="CHEBI:15377"/>
        <dbReference type="ChEBI" id="CHEBI:15378"/>
        <dbReference type="ChEBI" id="CHEBI:30823"/>
        <dbReference type="ChEBI" id="CHEBI:52392"/>
        <dbReference type="ChEBI" id="CHEBI:75449"/>
    </reaction>
    <physiologicalReaction direction="left-to-right" evidence="16">
        <dbReference type="Rhea" id="RHEA:38516"/>
    </physiologicalReaction>
</comment>
<comment type="catalytic activity">
    <reaction evidence="6">
        <text>1-(9Z-octadecenoyl)-2-octadecanoyl-sn-glycerol + H2O = 2-octadecanoylglycerol + (9Z)-octadecenoate + H(+)</text>
        <dbReference type="Rhea" id="RHEA:38519"/>
        <dbReference type="ChEBI" id="CHEBI:15377"/>
        <dbReference type="ChEBI" id="CHEBI:15378"/>
        <dbReference type="ChEBI" id="CHEBI:30823"/>
        <dbReference type="ChEBI" id="CHEBI:75448"/>
        <dbReference type="ChEBI" id="CHEBI:75456"/>
    </reaction>
    <physiologicalReaction direction="left-to-right" evidence="16">
        <dbReference type="Rhea" id="RHEA:38520"/>
    </physiologicalReaction>
</comment>
<comment type="catalytic activity">
    <reaction evidence="6">
        <text>1-(9Z-octadecenoyl)-2-(9Z,12Z-octadecadienoyl)-sn-glycerol + H2O = 2-(9Z,12Z-octadecadienoyl)-glycerol + (9Z)-octadecenoate + H(+)</text>
        <dbReference type="Rhea" id="RHEA:38523"/>
        <dbReference type="ChEBI" id="CHEBI:15377"/>
        <dbReference type="ChEBI" id="CHEBI:15378"/>
        <dbReference type="ChEBI" id="CHEBI:30823"/>
        <dbReference type="ChEBI" id="CHEBI:75450"/>
        <dbReference type="ChEBI" id="CHEBI:75457"/>
    </reaction>
    <physiologicalReaction direction="left-to-right" evidence="16">
        <dbReference type="Rhea" id="RHEA:38524"/>
    </physiologicalReaction>
</comment>
<comment type="catalytic activity">
    <reaction evidence="6">
        <text>1-(9Z-octadecenoyl)-2-O-(5Z,8Z,11Z,14Z-eicosatetraenyl)-sn-glycerol + H2O = 2-O-(5Z,8Z,11Z,14Z)-eicosatetraenylglycerol + (9Z)-octadecenoate + H(+)</text>
        <dbReference type="Rhea" id="RHEA:38527"/>
        <dbReference type="ChEBI" id="CHEBI:15377"/>
        <dbReference type="ChEBI" id="CHEBI:15378"/>
        <dbReference type="ChEBI" id="CHEBI:30823"/>
        <dbReference type="ChEBI" id="CHEBI:75913"/>
        <dbReference type="ChEBI" id="CHEBI:75914"/>
    </reaction>
    <physiologicalReaction direction="left-to-right" evidence="16">
        <dbReference type="Rhea" id="RHEA:38528"/>
    </physiologicalReaction>
</comment>
<comment type="cofactor">
    <cofactor evidence="6">
        <name>Ca(2+)</name>
        <dbReference type="ChEBI" id="CHEBI:29108"/>
    </cofactor>
</comment>
<comment type="activity regulation">
    <text evidence="6 9 10">Inhibited by 1,2,3-triazole urea covalent inhibitors KT172, DH376 and DO34 (PubMed:26668358). Inhibited by p-hydroxy-mercuri-benzoate and HgCl(2), but not to PMSF. Also inhibited by RHC80267 (PubMed:14610053). Diacylglycerol lipase activity is inhibited by the phosphorylation of Ser-782 and Ser-808 by CAMK2A (PubMed:23502535).</text>
</comment>
<comment type="biophysicochemical properties">
    <kinetics>
        <KM evidence="6">154.7 uM for diacylglycerol</KM>
        <KM evidence="9">158 uM for 1-steroyl-2-arachidonoylglycerol</KM>
        <Vmax evidence="6">33.3 nmol/min/mg enzyme</Vmax>
        <Vmax evidence="9">9.8 pmol/min/mg enzyme with 1-steroyl-2-arachidonoylglycerol as substrat</Vmax>
    </kinetics>
    <phDependence>
        <text evidence="6">Optimum pH is 7.0.</text>
    </phDependence>
</comment>
<comment type="subunit">
    <text evidence="2 9">Interacts (via C-terminal) with CAMK2A; leading to the phosphorylation and inhibition of DAGLA enzymatic activity (PubMed:23502535). Interacts (via PPXXF motif) with HOMER1 and HOMER2; this interaction is required for DAGLA membrane localization (By similarity).</text>
</comment>
<comment type="interaction">
    <interactant intactId="EBI-12808806">
        <id>Q9Y4D2</id>
    </interactant>
    <interactant intactId="EBI-2807956">
        <id>Q96FZ5</id>
        <label>CMTM7</label>
    </interactant>
    <organismsDiffer>false</organismsDiffer>
    <experiments>3</experiments>
</comment>
<comment type="interaction">
    <interactant intactId="EBI-12808806">
        <id>Q9Y4D2</id>
    </interactant>
    <interactant intactId="EBI-2820517">
        <id>Q8TAF8</id>
        <label>LHFPL5</label>
    </interactant>
    <organismsDiffer>false</organismsDiffer>
    <experiments>3</experiments>
</comment>
<comment type="interaction">
    <interactant intactId="EBI-12808806">
        <id>Q9Y4D2</id>
    </interactant>
    <interactant intactId="EBI-3932027">
        <id>P21145</id>
        <label>MAL</label>
    </interactant>
    <organismsDiffer>false</organismsDiffer>
    <experiments>3</experiments>
</comment>
<comment type="interaction">
    <interactant intactId="EBI-12808806">
        <id>Q9Y4D2</id>
    </interactant>
    <interactant intactId="EBI-750078">
        <id>Q13021</id>
        <label>MALL</label>
    </interactant>
    <organismsDiffer>false</organismsDiffer>
    <experiments>3</experiments>
</comment>
<comment type="interaction">
    <interactant intactId="EBI-12808806">
        <id>Q9Y4D2</id>
    </interactant>
    <interactant intactId="EBI-12070086">
        <id>Q5J8X5</id>
        <label>MS4A13</label>
    </interactant>
    <organismsDiffer>false</organismsDiffer>
    <experiments>3</experiments>
</comment>
<comment type="interaction">
    <interactant intactId="EBI-12808806">
        <id>Q9Y4D2</id>
    </interactant>
    <interactant intactId="EBI-1211440">
        <id>P27105</id>
        <label>STOM</label>
    </interactant>
    <organismsDiffer>false</organismsDiffer>
    <experiments>3</experiments>
</comment>
<comment type="interaction">
    <interactant intactId="EBI-12808806">
        <id>Q9Y4D2</id>
    </interactant>
    <interactant intactId="EBI-10173151">
        <id>A2RU14</id>
        <label>TMEM218</label>
    </interactant>
    <organismsDiffer>false</organismsDiffer>
    <experiments>3</experiments>
</comment>
<comment type="interaction">
    <interactant intactId="EBI-12808806">
        <id>Q9Y4D2</id>
    </interactant>
    <interactant intactId="EBI-11988865">
        <id>A5PKU2</id>
        <label>TUSC5</label>
    </interactant>
    <organismsDiffer>false</organismsDiffer>
    <experiments>3</experiments>
</comment>
<comment type="interaction">
    <interactant intactId="EBI-12808806">
        <id>Q9Y4D2</id>
    </interactant>
    <interactant intactId="EBI-12237619">
        <id>O75841</id>
        <label>UPK1B</label>
    </interactant>
    <organismsDiffer>false</organismsDiffer>
    <experiments>6</experiments>
</comment>
<comment type="interaction">
    <interactant intactId="EBI-12808806">
        <id>Q9Y4D2</id>
    </interactant>
    <interactant intactId="EBI-1055364">
        <id>Q3ZAQ7</id>
        <label>VMA21</label>
    </interactant>
    <organismsDiffer>false</organismsDiffer>
    <experiments>3</experiments>
</comment>
<comment type="subcellular location">
    <subcellularLocation>
        <location evidence="11">Cell membrane</location>
        <topology evidence="3">Multi-pass membrane protein</topology>
    </subcellularLocation>
    <subcellularLocation>
        <location evidence="11">Postsynaptic density membrane</location>
        <topology evidence="3">Multi-pass membrane protein</topology>
    </subcellularLocation>
    <subcellularLocation>
        <location evidence="11">Early endosome membrane</location>
        <topology evidence="3">Multi-pass membrane protein</topology>
    </subcellularLocation>
    <subcellularLocation>
        <location evidence="2">Cell projection</location>
        <location evidence="2">Dendritic spine membrane</location>
        <topology evidence="3">Multi-pass membrane protein</topology>
    </subcellularLocation>
    <text evidence="11">Cycles between the cell surface and an intracellular endosomal compartment. Internalized by early endosomes via a clathrin-independent pathway before transport back to the postsynaptic membrane surface in a PKC-dependent manner.</text>
</comment>
<comment type="tissue specificity">
    <text evidence="6 7">Highly expressed in brain and pancreas.</text>
</comment>
<comment type="PTM">
    <text evidence="9">Phosphorylated at Ser-782 and Ser-808 by CAMK2A; phosphorylation by CAMK2A inhibits diacylglycerol lipase activity.</text>
</comment>
<comment type="disease" evidence="8">
    <disease id="DI-03078">
        <name>Spinocerebellar ataxia 20</name>
        <acronym>SCA20</acronym>
        <description>Spinocerebellar ataxia is a clinically and genetically heterogeneous group of cerebellar disorders. Patients show progressive incoordination of gait and often poor coordination of hands, speech and eye movements, due to degeneration of the cerebellum with variable involvement of the brainstem and spinal cord. SCA20 is an autosomal dominant, adult-onset form characterized by dysarthria due to spasmodic dysphonia followed by slowly progressive ataxia.</description>
        <dbReference type="MIM" id="608687"/>
    </disease>
    <text>The disease may be caused by variants affecting the gene represented in this entry. A copy number variation consisting of a 260-kb duplication at chromosome 11q12.2-12.3 is responsible for SCA20. The critical gene within the duplicated segment may be DAGLA.</text>
</comment>
<comment type="disease" evidence="12">
    <disease id="DI-06892">
        <name>Neuroocular syndrome 2, paroxysmal type</name>
        <acronym>NOC2</acronym>
        <description>A form of neuroocular syndrome, a group of disorders characterized by developmental delay, impaired intellectual development and ocular anomalies as primary findings. NOC2 is an autosomal dominant form characterized by eye deviation or nystagmus with abnormal head posturing apparent from birth or early infancy. Affected individuals also have hypotonia, mild developmental delay, dysarthria, and gait ataxia. Most patients have mildly impaired intellectual development.</description>
        <dbReference type="MIM" id="168885"/>
    </disease>
    <text>The disease is caused by variants affecting the gene represented in this entry.</text>
</comment>
<comment type="similarity">
    <text evidence="15">Belongs to the AB hydrolase superfamily. Lipase family.</text>
</comment>
<comment type="sequence caution" evidence="15">
    <conflict type="erroneous initiation">
        <sequence resource="EMBL-CDS" id="BAA31634"/>
    </conflict>
    <text>Extended N-terminus.</text>
</comment>
<gene>
    <name type="primary">DAGLA</name>
    <name type="synonym">C11orf11</name>
    <name type="synonym">KIAA0659</name>
    <name evidence="14" type="synonym">NSDDR</name>
</gene>
<keyword id="KW-0106">Calcium</keyword>
<keyword id="KW-1003">Cell membrane</keyword>
<keyword id="KW-0966">Cell projection</keyword>
<keyword id="KW-0225">Disease variant</keyword>
<keyword id="KW-0967">Endosome</keyword>
<keyword id="KW-0325">Glycoprotein</keyword>
<keyword id="KW-0378">Hydrolase</keyword>
<keyword id="KW-0991">Intellectual disability</keyword>
<keyword id="KW-0442">Lipid degradation</keyword>
<keyword id="KW-0443">Lipid metabolism</keyword>
<keyword id="KW-0472">Membrane</keyword>
<keyword id="KW-0479">Metal-binding</keyword>
<keyword id="KW-0523">Neurodegeneration</keyword>
<keyword id="KW-0597">Phosphoprotein</keyword>
<keyword id="KW-0628">Postsynaptic cell membrane</keyword>
<keyword id="KW-1267">Proteomics identification</keyword>
<keyword id="KW-1185">Reference proteome</keyword>
<keyword id="KW-0950">Spinocerebellar ataxia</keyword>
<keyword id="KW-0770">Synapse</keyword>
<keyword id="KW-0812">Transmembrane</keyword>
<keyword id="KW-1133">Transmembrane helix</keyword>
<protein>
    <recommendedName>
        <fullName>Diacylglycerol lipase-alpha</fullName>
        <shortName>DAGL-alpha</shortName>
        <shortName>DGL-alpha</shortName>
        <ecNumber evidence="6 9 10">3.1.1.116</ecNumber>
    </recommendedName>
    <alternativeName>
        <fullName evidence="14">Neural stem cell-derived dendrite regulator</fullName>
    </alternativeName>
    <alternativeName>
        <fullName evidence="13">Sn1-specific diacylglycerol lipase alpha</fullName>
    </alternativeName>
</protein>
<feature type="chain" id="PRO_0000248347" description="Diacylglycerol lipase-alpha">
    <location>
        <begin position="1"/>
        <end position="1042"/>
    </location>
</feature>
<feature type="topological domain" description="Cytoplasmic" evidence="3">
    <location>
        <begin position="1"/>
        <end position="22"/>
    </location>
</feature>
<feature type="transmembrane region" description="Helical" evidence="3">
    <location>
        <begin position="23"/>
        <end position="43"/>
    </location>
</feature>
<feature type="topological domain" description="Extracellular" evidence="3">
    <location>
        <begin position="44"/>
        <end position="60"/>
    </location>
</feature>
<feature type="transmembrane region" description="Helical" evidence="3">
    <location>
        <begin position="61"/>
        <end position="81"/>
    </location>
</feature>
<feature type="topological domain" description="Cytoplasmic" evidence="3">
    <location>
        <begin position="82"/>
        <end position="101"/>
    </location>
</feature>
<feature type="transmembrane region" description="Helical" evidence="3">
    <location>
        <begin position="102"/>
        <end position="122"/>
    </location>
</feature>
<feature type="topological domain" description="Extracellular" evidence="3">
    <location>
        <begin position="123"/>
        <end position="136"/>
    </location>
</feature>
<feature type="transmembrane region" description="Helical" evidence="3">
    <location>
        <begin position="137"/>
        <end position="157"/>
    </location>
</feature>
<feature type="topological domain" description="Cytoplasmic" evidence="3">
    <location>
        <begin position="158"/>
        <end position="1042"/>
    </location>
</feature>
<feature type="region of interest" description="Disordered" evidence="5">
    <location>
        <begin position="846"/>
        <end position="903"/>
    </location>
</feature>
<feature type="region of interest" description="Disordered" evidence="5">
    <location>
        <begin position="1014"/>
        <end position="1042"/>
    </location>
</feature>
<feature type="active site" description="Charge relay system" evidence="4">
    <location>
        <position position="472"/>
    </location>
</feature>
<feature type="active site" description="Charge relay system" evidence="4">
    <location>
        <position position="524"/>
    </location>
</feature>
<feature type="modified residue" description="Phosphoserine" evidence="1">
    <location>
        <position position="727"/>
    </location>
</feature>
<feature type="modified residue" description="Phosphoserine" evidence="2">
    <location>
        <position position="729"/>
    </location>
</feature>
<feature type="modified residue" description="Phosphoserine" evidence="2">
    <location>
        <position position="732"/>
    </location>
</feature>
<feature type="modified residue" description="Phosphoserine" evidence="2">
    <location>
        <position position="743"/>
    </location>
</feature>
<feature type="modified residue" description="Phosphoserine" evidence="9">
    <location>
        <position position="782"/>
    </location>
</feature>
<feature type="modified residue" description="Phosphoserine" evidence="2">
    <location>
        <position position="784"/>
    </location>
</feature>
<feature type="modified residue" description="Phosphoserine" evidence="1">
    <location>
        <position position="806"/>
    </location>
</feature>
<feature type="modified residue" description="Phosphoserine" evidence="9">
    <location>
        <position position="808"/>
    </location>
</feature>
<feature type="modified residue" description="Phosphoserine" evidence="1">
    <location>
        <position position="833"/>
    </location>
</feature>
<feature type="modified residue" description="Phosphoserine" evidence="1">
    <location>
        <position position="847"/>
    </location>
</feature>
<feature type="modified residue" description="Phosphoserine" evidence="2">
    <location>
        <position position="952"/>
    </location>
</feature>
<feature type="modified residue" description="Phosphothreonine" evidence="2">
    <location>
        <position position="1023"/>
    </location>
</feature>
<feature type="glycosylation site" description="N-linked (GlcNAc...) asparagine" evidence="3">
    <location>
        <position position="133"/>
    </location>
</feature>
<feature type="sequence variant" id="VAR_049822" description="In dbSNP:rs35056845.">
    <original>G</original>
    <variation>V</variation>
    <location>
        <position position="735"/>
    </location>
</feature>
<feature type="sequence variant" id="VAR_089505" description="In NOC2; likely pathogenic." evidence="12">
    <location>
        <begin position="790"/>
        <end position="1042"/>
    </location>
</feature>
<feature type="sequence variant" id="VAR_089506" description="In NOC2; likely pathogenic; may affect subcellular location, leading to the formation of perinuclear aggregates; does not affect protein expression, nor enzymatic activity in vitro." evidence="12">
    <location>
        <begin position="814"/>
        <end position="1042"/>
    </location>
</feature>
<feature type="sequence variant" id="VAR_089508" description="In NOC2; pathogenic." evidence="12">
    <location>
        <begin position="829"/>
        <end position="1042"/>
    </location>
</feature>
<feature type="sequence variant" id="VAR_089507" description="In NOC2; likely pathogenic." evidence="12">
    <location>
        <begin position="851"/>
        <end position="1042"/>
    </location>
</feature>
<feature type="sequence variant" id="VAR_027274" description="In dbSNP:rs3741252.">
    <original>P</original>
    <variation>L</variation>
    <location>
        <position position="889"/>
    </location>
</feature>
<feature type="sequence variant" id="VAR_049823" description="In dbSNP:rs34956386.">
    <original>D</original>
    <variation>E</variation>
    <location>
        <position position="945"/>
    </location>
</feature>
<feature type="mutagenesis site" description="Slightly reduces phosphorylation by CAMK2A. Abolishes phosphorylation by CAMK2A; when associated with A-808." evidence="9">
    <original>S</original>
    <variation>A</variation>
    <location>
        <position position="782"/>
    </location>
</feature>
<feature type="mutagenesis site" description="Phosphomimetic mutation; decreased the Vmax of 2-AG production without affecting the KM; when associated with E-808." evidence="9">
    <original>S</original>
    <variation>E</variation>
    <location>
        <position position="782"/>
    </location>
</feature>
<feature type="mutagenesis site" description="Reduces phosphorylation by CAMK2A. Abolishes phosphorylation by CAMK2A; when associated with A-782." evidence="9">
    <original>S</original>
    <variation>A</variation>
    <location>
        <position position="808"/>
    </location>
</feature>
<feature type="mutagenesis site" description="Phosphomimetic mutation; decreased the Vmax of 2-AG production without affecting the KM; when associated with E-782." evidence="9">
    <original>S</original>
    <variation>E</variation>
    <location>
        <position position="808"/>
    </location>
</feature>